<gene>
    <name type="primary">COX5A</name>
</gene>
<feature type="transit peptide" description="Mitochondrion" evidence="1">
    <location>
        <begin position="1"/>
        <end position="45"/>
    </location>
</feature>
<feature type="chain" id="PRO_0000355983" description="Cytochrome c oxidase subunit 5A, mitochondrial">
    <location>
        <begin position="46"/>
        <end position="154"/>
    </location>
</feature>
<feature type="short sequence motif" description="SIFI-degron" evidence="4">
    <location>
        <begin position="2"/>
        <end position="21"/>
    </location>
</feature>
<feature type="modified residue" description="N6-acetyllysine" evidence="3">
    <location>
        <position position="91"/>
    </location>
</feature>
<feature type="modified residue" description="N6-acetyllysine" evidence="3">
    <location>
        <position position="117"/>
    </location>
</feature>
<feature type="modified residue" description="Phosphothreonine" evidence="4">
    <location>
        <position position="145"/>
    </location>
</feature>
<evidence type="ECO:0000250" key="1">
    <source>
        <dbReference type="UniProtKB" id="P00426"/>
    </source>
</evidence>
<evidence type="ECO:0000250" key="2">
    <source>
        <dbReference type="UniProtKB" id="P00427"/>
    </source>
</evidence>
<evidence type="ECO:0000250" key="3">
    <source>
        <dbReference type="UniProtKB" id="P12787"/>
    </source>
</evidence>
<evidence type="ECO:0000250" key="4">
    <source>
        <dbReference type="UniProtKB" id="P20674"/>
    </source>
</evidence>
<evidence type="ECO:0000305" key="5"/>
<protein>
    <recommendedName>
        <fullName>Cytochrome c oxidase subunit 5A, mitochondrial</fullName>
    </recommendedName>
    <alternativeName>
        <fullName>Cytochrome c oxidase polypeptide Va</fullName>
    </alternativeName>
</protein>
<organism>
    <name type="scientific">Notamacropus parma</name>
    <name type="common">Parma wallaby</name>
    <name type="synonym">Macropus parma</name>
    <dbReference type="NCBI Taxonomy" id="413582"/>
    <lineage>
        <taxon>Eukaryota</taxon>
        <taxon>Metazoa</taxon>
        <taxon>Chordata</taxon>
        <taxon>Craniata</taxon>
        <taxon>Vertebrata</taxon>
        <taxon>Euteleostomi</taxon>
        <taxon>Mammalia</taxon>
        <taxon>Metatheria</taxon>
        <taxon>Diprotodontia</taxon>
        <taxon>Macropodidae</taxon>
        <taxon>Notamacropus</taxon>
    </lineage>
</organism>
<sequence length="154" mass="17110">MLAAALRRCXASVRVLLPKPGAAAPSSWSSSAFRATAAIQSVRCYSHGSHETDEEFDARWVTYFSKPDLDAWELRKGMNTLVGYDLVPEPKIIDAALRACRRLDDFASAVRILEVVKDKAGPHKEIYPYIIQELRPTLDELGISTPEELGLDKP</sequence>
<proteinExistence type="evidence at transcript level"/>
<dbReference type="EMBL" id="DQ987252">
    <property type="protein sequence ID" value="ABK92299.1"/>
    <property type="molecule type" value="mRNA"/>
</dbReference>
<dbReference type="UniPathway" id="UPA00705"/>
<dbReference type="GO" id="GO:0005743">
    <property type="term" value="C:mitochondrial inner membrane"/>
    <property type="evidence" value="ECO:0007669"/>
    <property type="project" value="UniProtKB-SubCell"/>
</dbReference>
<dbReference type="GO" id="GO:0045277">
    <property type="term" value="C:respiratory chain complex IV"/>
    <property type="evidence" value="ECO:0007669"/>
    <property type="project" value="InterPro"/>
</dbReference>
<dbReference type="GO" id="GO:0046872">
    <property type="term" value="F:metal ion binding"/>
    <property type="evidence" value="ECO:0007669"/>
    <property type="project" value="UniProtKB-KW"/>
</dbReference>
<dbReference type="GO" id="GO:0006123">
    <property type="term" value="P:mitochondrial electron transport, cytochrome c to oxygen"/>
    <property type="evidence" value="ECO:0007669"/>
    <property type="project" value="InterPro"/>
</dbReference>
<dbReference type="CDD" id="cd00923">
    <property type="entry name" value="Cyt_c_Oxidase_Va"/>
    <property type="match status" value="1"/>
</dbReference>
<dbReference type="FunFam" id="1.25.40.40:FF:000002">
    <property type="entry name" value="cytochrome c oxidase subunit 5A, mitochondrial"/>
    <property type="match status" value="1"/>
</dbReference>
<dbReference type="Gene3D" id="1.25.40.40">
    <property type="entry name" value="Cytochrome c oxidase, subunit Va/VI"/>
    <property type="match status" value="1"/>
</dbReference>
<dbReference type="InterPro" id="IPR003204">
    <property type="entry name" value="Cyt_c_oxidase_su5A/6"/>
</dbReference>
<dbReference type="InterPro" id="IPR036545">
    <property type="entry name" value="Cyt_c_oxidase_su5A/6_sf"/>
</dbReference>
<dbReference type="PANTHER" id="PTHR14200">
    <property type="entry name" value="CYTOCHROME C OXIDASE POLYPEPTIDE"/>
    <property type="match status" value="1"/>
</dbReference>
<dbReference type="PANTHER" id="PTHR14200:SF11">
    <property type="entry name" value="CYTOCHROME C OXIDASE SUBUNIT 5A, MITOCHONDRIAL"/>
    <property type="match status" value="1"/>
</dbReference>
<dbReference type="Pfam" id="PF02284">
    <property type="entry name" value="COX5A"/>
    <property type="match status" value="1"/>
</dbReference>
<dbReference type="SUPFAM" id="SSF48479">
    <property type="entry name" value="Cytochrome c oxidase subunit E"/>
    <property type="match status" value="1"/>
</dbReference>
<accession>B0VYY5</accession>
<keyword id="KW-0007">Acetylation</keyword>
<keyword id="KW-0349">Heme</keyword>
<keyword id="KW-0408">Iron</keyword>
<keyword id="KW-0472">Membrane</keyword>
<keyword id="KW-0479">Metal-binding</keyword>
<keyword id="KW-0496">Mitochondrion</keyword>
<keyword id="KW-0999">Mitochondrion inner membrane</keyword>
<keyword id="KW-0597">Phosphoprotein</keyword>
<keyword id="KW-0809">Transit peptide</keyword>
<keyword id="KW-0832">Ubl conjugation</keyword>
<reference key="1">
    <citation type="journal article" date="2008" name="BMC Evol. Biol.">
        <title>Molecular evolution of the cytochrome c oxidase subunit 5A gene in primates.</title>
        <authorList>
            <person name="Uddin M."/>
            <person name="Opazo J.C."/>
            <person name="Wildman D.E."/>
            <person name="Sherwood C.C."/>
            <person name="Hof P.R."/>
            <person name="Goodman M."/>
            <person name="Grossman L.I."/>
        </authorList>
    </citation>
    <scope>NUCLEOTIDE SEQUENCE [MRNA]</scope>
</reference>
<comment type="function">
    <text evidence="2">Component of the cytochrome c oxidase, the last enzyme in the mitochondrial electron transport chain which drives oxidative phosphorylation. The respiratory chain contains 3 multisubunit complexes succinate dehydrogenase (complex II, CII), ubiquinol-cytochrome c oxidoreductase (cytochrome b-c1 complex, complex III, CIII) and cytochrome c oxidase (complex IV, CIV), that cooperate to transfer electrons derived from NADH and succinate to molecular oxygen, creating an electrochemical gradient over the inner membrane that drives transmembrane transport and the ATP synthase. Cytochrome c oxidase is the component of the respiratory chain that catalyzes the reduction of oxygen to water. Electrons originating from reduced cytochrome c in the intermembrane space (IMS) are transferred via the dinuclear copper A center (CU(A)) of subunit 2 and heme A of subunit 1 to the active site in subunit 1, a binuclear center (BNC) formed by heme A3 and copper B (CU(B)). The BNC reduces molecular oxygen to 2 water molecules using 4 electrons from cytochrome c in the IMS and 4 protons from the mitochondrial matrix.</text>
</comment>
<comment type="pathway">
    <text evidence="2">Energy metabolism; oxidative phosphorylation.</text>
</comment>
<comment type="subunit">
    <text evidence="1 4">Component of the cytochrome c oxidase (complex IV, CIV), a multisubunit enzyme composed of 14 subunits. The complex is composed of a catalytic core of 3 subunits MT-CO1, MT-CO2 and MT-CO3, encoded in the mitochondrial DNA, and 11 supernumerary subunits COX4I, COX5A, COX5B, COX6A, COX6B, COX6C, COX7A, COX7B, COX7C, COX8 and NDUFA4, which are encoded in the nuclear genome. The complex exists as a monomer or a dimer and forms supercomplexes (SCs) in the inner mitochondrial membrane with NADH-ubiquinone oxidoreductase (complex I, CI) and ubiquinol-cytochrome c oxidoreductase (cytochrome b-c1 complex, complex III, CIII), resulting in different assemblies (supercomplex SCI(1)III(2)IV(1) and megacomplex MCI(2)III(2)IV(2)) (By similarity). Interacts with AFG1L (By similarity). Interacts with RAB5IF (By similarity).</text>
</comment>
<comment type="subcellular location">
    <subcellularLocation>
        <location evidence="1">Mitochondrion inner membrane</location>
        <topology evidence="1">Peripheral membrane protein</topology>
        <orientation evidence="1">Matrix side</orientation>
    </subcellularLocation>
</comment>
<comment type="PTM">
    <text evidence="4">In response to mitochondrial stress, the precursor protein is ubiquitinated by the SIFI complex in the cytoplasm before mitochondrial import, leading to its degradation. Within the SIFI complex, UBR4 initiates ubiquitin chain that are further elongated or branched by KCMF1.</text>
</comment>
<comment type="similarity">
    <text evidence="5">Belongs to the cytochrome c oxidase subunit 5A family.</text>
</comment>
<name>COX5A_NOTPR</name>